<name>IF4A_CRYPV</name>
<accession>O02494</accession>
<organism>
    <name type="scientific">Cryptosporidium parvum</name>
    <dbReference type="NCBI Taxonomy" id="5807"/>
    <lineage>
        <taxon>Eukaryota</taxon>
        <taxon>Sar</taxon>
        <taxon>Alveolata</taxon>
        <taxon>Apicomplexa</taxon>
        <taxon>Conoidasida</taxon>
        <taxon>Coccidia</taxon>
        <taxon>Eucoccidiorida</taxon>
        <taxon>Eimeriorina</taxon>
        <taxon>Cryptosporidiidae</taxon>
        <taxon>Cryptosporidium</taxon>
    </lineage>
</organism>
<gene>
    <name type="primary">EIF4-A</name>
</gene>
<protein>
    <recommendedName>
        <fullName>Eukaryotic initiation factor 4A</fullName>
        <shortName>eIF-4A</shortName>
        <ecNumber>3.6.4.13</ecNumber>
    </recommendedName>
    <alternativeName>
        <fullName>ATP-dependent RNA helicase eIF4A</fullName>
    </alternativeName>
</protein>
<sequence>MTNSEQNPPSEENVQVASTGEIESNYDEIVECFEALNLEGDLLRGIFAYGFEKPSAIQQRGIKPILDGYDTIGQAQSGTGKTATFVIAALQKIDYSLNACQVLLLAPTRELAQQIQKVALALGDYCELRCHACVGGTSVRDDMNKLKSGVHMVVGTPGRVFDMLDKGYLRVDNLKLFILDEADEMLSRGFKVQIHDIFKKLPQDVQVALFSATMPNEILHLTTQFMRDPKRILVKQEELTLEGIRQFYVGVEKDEWKMDTLIDLYETLTIVQAIIYCNTRRRVDQLTKQMRERDFTCSSMHGDMDQKDREVIMRQFRSGSSRVLITTDLLARGIDVQQVSLVINYDLPVSPETYIHRIGRSGRFGKKGVSINFVTDDDIVCLRDIERHYNTQIEEMPMGITDILQ</sequence>
<feature type="chain" id="PRO_0000054946" description="Eukaryotic initiation factor 4A">
    <location>
        <begin position="1"/>
        <end position="405"/>
    </location>
</feature>
<feature type="domain" description="Helicase ATP-binding" evidence="2">
    <location>
        <begin position="62"/>
        <end position="232"/>
    </location>
</feature>
<feature type="domain" description="Helicase C-terminal" evidence="3">
    <location>
        <begin position="243"/>
        <end position="404"/>
    </location>
</feature>
<feature type="short sequence motif" description="Q motif">
    <location>
        <begin position="31"/>
        <end position="59"/>
    </location>
</feature>
<feature type="short sequence motif" description="DEAD box">
    <location>
        <begin position="180"/>
        <end position="183"/>
    </location>
</feature>
<feature type="binding site" evidence="2">
    <location>
        <begin position="75"/>
        <end position="82"/>
    </location>
    <ligand>
        <name>ATP</name>
        <dbReference type="ChEBI" id="CHEBI:30616"/>
    </ligand>
</feature>
<reference key="1">
    <citation type="submission" date="1997-06" db="EMBL/GenBank/DDBJ databases">
        <title>Cloning of the eIF4-A translation initiation factor gene of Cryptosporidium parvum.</title>
        <authorList>
            <person name="Spano F."/>
            <person name="Putignani L."/>
            <person name="Crisanti A."/>
        </authorList>
    </citation>
    <scope>NUCLEOTIDE SEQUENCE [MRNA]</scope>
    <source>
        <strain>Moredun</strain>
    </source>
</reference>
<dbReference type="EC" id="3.6.4.13"/>
<dbReference type="EMBL" id="AF001378">
    <property type="protein sequence ID" value="AAB58799.1"/>
    <property type="molecule type" value="mRNA"/>
</dbReference>
<dbReference type="EMBL" id="AF001211">
    <property type="protein sequence ID" value="AAB58726.1"/>
    <property type="molecule type" value="mRNA"/>
</dbReference>
<dbReference type="SMR" id="O02494"/>
<dbReference type="VEuPathDB" id="CryptoDB:cgd1_880"/>
<dbReference type="VEuPathDB" id="CryptoDB:CPATCC_0038480"/>
<dbReference type="OMA" id="FGCQALV"/>
<dbReference type="GO" id="GO:0005524">
    <property type="term" value="F:ATP binding"/>
    <property type="evidence" value="ECO:0007669"/>
    <property type="project" value="UniProtKB-KW"/>
</dbReference>
<dbReference type="GO" id="GO:0016887">
    <property type="term" value="F:ATP hydrolysis activity"/>
    <property type="evidence" value="ECO:0007669"/>
    <property type="project" value="RHEA"/>
</dbReference>
<dbReference type="GO" id="GO:0003723">
    <property type="term" value="F:RNA binding"/>
    <property type="evidence" value="ECO:0007669"/>
    <property type="project" value="UniProtKB-KW"/>
</dbReference>
<dbReference type="GO" id="GO:0003724">
    <property type="term" value="F:RNA helicase activity"/>
    <property type="evidence" value="ECO:0007669"/>
    <property type="project" value="UniProtKB-EC"/>
</dbReference>
<dbReference type="GO" id="GO:0003743">
    <property type="term" value="F:translation initiation factor activity"/>
    <property type="evidence" value="ECO:0007669"/>
    <property type="project" value="UniProtKB-KW"/>
</dbReference>
<dbReference type="CDD" id="cd18046">
    <property type="entry name" value="DEADc_EIF4AII_EIF4AI_DDX2"/>
    <property type="match status" value="1"/>
</dbReference>
<dbReference type="CDD" id="cd18787">
    <property type="entry name" value="SF2_C_DEAD"/>
    <property type="match status" value="1"/>
</dbReference>
<dbReference type="FunFam" id="3.40.50.300:FF:000089">
    <property type="entry name" value="Eukaryotic initiation factor 4A-II"/>
    <property type="match status" value="1"/>
</dbReference>
<dbReference type="FunFam" id="3.40.50.300:FF:000031">
    <property type="entry name" value="Eukaryotic initiation factor 4A-III"/>
    <property type="match status" value="1"/>
</dbReference>
<dbReference type="Gene3D" id="3.40.50.300">
    <property type="entry name" value="P-loop containing nucleotide triphosphate hydrolases"/>
    <property type="match status" value="2"/>
</dbReference>
<dbReference type="InterPro" id="IPR011545">
    <property type="entry name" value="DEAD/DEAH_box_helicase_dom"/>
</dbReference>
<dbReference type="InterPro" id="IPR044728">
    <property type="entry name" value="EIF4A_DEADc"/>
</dbReference>
<dbReference type="InterPro" id="IPR014001">
    <property type="entry name" value="Helicase_ATP-bd"/>
</dbReference>
<dbReference type="InterPro" id="IPR001650">
    <property type="entry name" value="Helicase_C-like"/>
</dbReference>
<dbReference type="InterPro" id="IPR027417">
    <property type="entry name" value="P-loop_NTPase"/>
</dbReference>
<dbReference type="InterPro" id="IPR000629">
    <property type="entry name" value="RNA-helicase_DEAD-box_CS"/>
</dbReference>
<dbReference type="InterPro" id="IPR014014">
    <property type="entry name" value="RNA_helicase_DEAD_Q_motif"/>
</dbReference>
<dbReference type="PANTHER" id="PTHR47958">
    <property type="entry name" value="ATP-DEPENDENT RNA HELICASE DBP3"/>
    <property type="match status" value="1"/>
</dbReference>
<dbReference type="Pfam" id="PF00270">
    <property type="entry name" value="DEAD"/>
    <property type="match status" value="1"/>
</dbReference>
<dbReference type="Pfam" id="PF00271">
    <property type="entry name" value="Helicase_C"/>
    <property type="match status" value="1"/>
</dbReference>
<dbReference type="SMART" id="SM00487">
    <property type="entry name" value="DEXDc"/>
    <property type="match status" value="1"/>
</dbReference>
<dbReference type="SMART" id="SM00490">
    <property type="entry name" value="HELICc"/>
    <property type="match status" value="1"/>
</dbReference>
<dbReference type="SUPFAM" id="SSF52540">
    <property type="entry name" value="P-loop containing nucleoside triphosphate hydrolases"/>
    <property type="match status" value="1"/>
</dbReference>
<dbReference type="PROSITE" id="PS00039">
    <property type="entry name" value="DEAD_ATP_HELICASE"/>
    <property type="match status" value="1"/>
</dbReference>
<dbReference type="PROSITE" id="PS51192">
    <property type="entry name" value="HELICASE_ATP_BIND_1"/>
    <property type="match status" value="1"/>
</dbReference>
<dbReference type="PROSITE" id="PS51194">
    <property type="entry name" value="HELICASE_CTER"/>
    <property type="match status" value="1"/>
</dbReference>
<dbReference type="PROSITE" id="PS51195">
    <property type="entry name" value="Q_MOTIF"/>
    <property type="match status" value="1"/>
</dbReference>
<proteinExistence type="evidence at transcript level"/>
<comment type="function">
    <text evidence="1">ATP-dependent RNA helicase which is a subunit of the eIF4F complex involved in cap recognition and is required for mRNA binding to ribosome. In the current model of translation initiation, eIF4A unwinds RNA secondary structures in the 5'-UTR of mRNAs which is necessary to allow efficient binding of the small ribosomal subunit, and subsequent scanning for the initiator codon (By similarity).</text>
</comment>
<comment type="catalytic activity">
    <reaction>
        <text>ATP + H2O = ADP + phosphate + H(+)</text>
        <dbReference type="Rhea" id="RHEA:13065"/>
        <dbReference type="ChEBI" id="CHEBI:15377"/>
        <dbReference type="ChEBI" id="CHEBI:15378"/>
        <dbReference type="ChEBI" id="CHEBI:30616"/>
        <dbReference type="ChEBI" id="CHEBI:43474"/>
        <dbReference type="ChEBI" id="CHEBI:456216"/>
        <dbReference type="EC" id="3.6.4.13"/>
    </reaction>
</comment>
<comment type="subunit">
    <text evidence="1">eIF4F is a multi-subunit complex, the composition of which varies with external and internal environmental conditions. It is composed of at least EIF4A, EIF4E and EIF4G (By similarity).</text>
</comment>
<comment type="similarity">
    <text evidence="4">Belongs to the DEAD box helicase family. eIF4A subfamily.</text>
</comment>
<keyword id="KW-0067">ATP-binding</keyword>
<keyword id="KW-0347">Helicase</keyword>
<keyword id="KW-0378">Hydrolase</keyword>
<keyword id="KW-0396">Initiation factor</keyword>
<keyword id="KW-0547">Nucleotide-binding</keyword>
<keyword id="KW-0648">Protein biosynthesis</keyword>
<keyword id="KW-0694">RNA-binding</keyword>
<evidence type="ECO:0000250" key="1"/>
<evidence type="ECO:0000255" key="2">
    <source>
        <dbReference type="PROSITE-ProRule" id="PRU00541"/>
    </source>
</evidence>
<evidence type="ECO:0000255" key="3">
    <source>
        <dbReference type="PROSITE-ProRule" id="PRU00542"/>
    </source>
</evidence>
<evidence type="ECO:0000305" key="4"/>